<reference key="1">
    <citation type="journal article" date="2000" name="Proc. Natl. Acad. Sci. U.S.A.">
        <title>Genome sequence of Halobacterium species NRC-1.</title>
        <authorList>
            <person name="Ng W.V."/>
            <person name="Kennedy S.P."/>
            <person name="Mahairas G.G."/>
            <person name="Berquist B."/>
            <person name="Pan M."/>
            <person name="Shukla H.D."/>
            <person name="Lasky S.R."/>
            <person name="Baliga N.S."/>
            <person name="Thorsson V."/>
            <person name="Sbrogna J."/>
            <person name="Swartzell S."/>
            <person name="Weir D."/>
            <person name="Hall J."/>
            <person name="Dahl T.A."/>
            <person name="Welti R."/>
            <person name="Goo Y.A."/>
            <person name="Leithauser B."/>
            <person name="Keller K."/>
            <person name="Cruz R."/>
            <person name="Danson M.J."/>
            <person name="Hough D.W."/>
            <person name="Maddocks D.G."/>
            <person name="Jablonski P.E."/>
            <person name="Krebs M.P."/>
            <person name="Angevine C.M."/>
            <person name="Dale H."/>
            <person name="Isenbarger T.A."/>
            <person name="Peck R.F."/>
            <person name="Pohlschroder M."/>
            <person name="Spudich J.L."/>
            <person name="Jung K.-H."/>
            <person name="Alam M."/>
            <person name="Freitas T."/>
            <person name="Hou S."/>
            <person name="Daniels C.J."/>
            <person name="Dennis P.P."/>
            <person name="Omer A.D."/>
            <person name="Ebhardt H."/>
            <person name="Lowe T.M."/>
            <person name="Liang P."/>
            <person name="Riley M."/>
            <person name="Hood L."/>
            <person name="DasSarma S."/>
        </authorList>
    </citation>
    <scope>NUCLEOTIDE SEQUENCE [LARGE SCALE GENOMIC DNA]</scope>
    <source>
        <strain>ATCC 700922 / JCM 11081 / NRC-1</strain>
    </source>
</reference>
<comment type="function">
    <text evidence="2">Catalyzes the NAD(P)H-dependent reduction of ketopantoate into pantoic acid.</text>
</comment>
<comment type="catalytic activity">
    <reaction evidence="2">
        <text>(R)-pantoate + NAD(+) = 2-dehydropantoate + NADH + H(+)</text>
        <dbReference type="Rhea" id="RHEA:61292"/>
        <dbReference type="ChEBI" id="CHEBI:11561"/>
        <dbReference type="ChEBI" id="CHEBI:15378"/>
        <dbReference type="ChEBI" id="CHEBI:15980"/>
        <dbReference type="ChEBI" id="CHEBI:57540"/>
        <dbReference type="ChEBI" id="CHEBI:57945"/>
    </reaction>
    <physiologicalReaction direction="right-to-left" evidence="2">
        <dbReference type="Rhea" id="RHEA:61294"/>
    </physiologicalReaction>
</comment>
<comment type="catalytic activity">
    <reaction evidence="2">
        <text>(R)-pantoate + NADP(+) = 2-dehydropantoate + NADPH + H(+)</text>
        <dbReference type="Rhea" id="RHEA:16233"/>
        <dbReference type="ChEBI" id="CHEBI:11561"/>
        <dbReference type="ChEBI" id="CHEBI:15378"/>
        <dbReference type="ChEBI" id="CHEBI:15980"/>
        <dbReference type="ChEBI" id="CHEBI:57783"/>
        <dbReference type="ChEBI" id="CHEBI:58349"/>
        <dbReference type="EC" id="1.1.1.169"/>
    </reaction>
    <physiologicalReaction direction="right-to-left" evidence="2">
        <dbReference type="Rhea" id="RHEA:16235"/>
    </physiologicalReaction>
</comment>
<comment type="pathway">
    <text evidence="2">Cofactor biosynthesis; coenzyme A biosynthesis.</text>
</comment>
<comment type="subcellular location">
    <subcellularLocation>
        <location evidence="2">Cytoplasm</location>
    </subcellularLocation>
</comment>
<comment type="similarity">
    <text evidence="3">Belongs to the ketopantoate reductase family.</text>
</comment>
<evidence type="ECO:0000250" key="1">
    <source>
        <dbReference type="UniProtKB" id="P0A9J4"/>
    </source>
</evidence>
<evidence type="ECO:0000250" key="2">
    <source>
        <dbReference type="UniProtKB" id="Q5JGC2"/>
    </source>
</evidence>
<evidence type="ECO:0000305" key="3"/>
<name>PANE_HALSA</name>
<protein>
    <recommendedName>
        <fullName evidence="2">2-dehydropantoate 2-reductase</fullName>
        <ecNumber evidence="2">1.1.1.169</ecNumber>
    </recommendedName>
    <alternativeName>
        <fullName evidence="2">Ketopantoate reductase</fullName>
        <shortName evidence="2">KPR</shortName>
    </alternativeName>
</protein>
<gene>
    <name type="ordered locus">VNG_0730C</name>
</gene>
<accession>Q9HRF0</accession>
<proteinExistence type="inferred from homology"/>
<dbReference type="EC" id="1.1.1.169" evidence="2"/>
<dbReference type="EMBL" id="AE004437">
    <property type="protein sequence ID" value="AAG19208.1"/>
    <property type="molecule type" value="Genomic_DNA"/>
</dbReference>
<dbReference type="PIR" id="D84230">
    <property type="entry name" value="D84230"/>
</dbReference>
<dbReference type="RefSeq" id="WP_010902504.1">
    <property type="nucleotide sequence ID" value="NC_002607.1"/>
</dbReference>
<dbReference type="SMR" id="Q9HRF0"/>
<dbReference type="STRING" id="64091.VNG_0730C"/>
<dbReference type="PaxDb" id="64091-VNG_0730C"/>
<dbReference type="KEGG" id="hal:VNG_0730C"/>
<dbReference type="PATRIC" id="fig|64091.14.peg.557"/>
<dbReference type="HOGENOM" id="CLU_031468_0_0_2"/>
<dbReference type="InParanoid" id="Q9HRF0"/>
<dbReference type="OrthoDB" id="201845at2157"/>
<dbReference type="PhylomeDB" id="Q9HRF0"/>
<dbReference type="UniPathway" id="UPA00241"/>
<dbReference type="Proteomes" id="UP000000554">
    <property type="component" value="Chromosome"/>
</dbReference>
<dbReference type="GO" id="GO:0005737">
    <property type="term" value="C:cytoplasm"/>
    <property type="evidence" value="ECO:0000318"/>
    <property type="project" value="GO_Central"/>
</dbReference>
<dbReference type="GO" id="GO:0008677">
    <property type="term" value="F:2-dehydropantoate 2-reductase activity"/>
    <property type="evidence" value="ECO:0007669"/>
    <property type="project" value="UniProtKB-EC"/>
</dbReference>
<dbReference type="GO" id="GO:0015937">
    <property type="term" value="P:coenzyme A biosynthetic process"/>
    <property type="evidence" value="ECO:0007669"/>
    <property type="project" value="UniProtKB-UniPathway"/>
</dbReference>
<dbReference type="GO" id="GO:0015940">
    <property type="term" value="P:pantothenate biosynthetic process"/>
    <property type="evidence" value="ECO:0007669"/>
    <property type="project" value="InterPro"/>
</dbReference>
<dbReference type="FunFam" id="1.10.1040.10:FF:000017">
    <property type="entry name" value="2-dehydropantoate 2-reductase"/>
    <property type="match status" value="1"/>
</dbReference>
<dbReference type="Gene3D" id="1.10.1040.10">
    <property type="entry name" value="N-(1-d-carboxylethyl)-l-norvaline Dehydrogenase, domain 2"/>
    <property type="match status" value="1"/>
</dbReference>
<dbReference type="Gene3D" id="3.40.50.720">
    <property type="entry name" value="NAD(P)-binding Rossmann-like Domain"/>
    <property type="match status" value="1"/>
</dbReference>
<dbReference type="InterPro" id="IPR008927">
    <property type="entry name" value="6-PGluconate_DH-like_C_sf"/>
</dbReference>
<dbReference type="InterPro" id="IPR013328">
    <property type="entry name" value="6PGD_dom2"/>
</dbReference>
<dbReference type="InterPro" id="IPR003710">
    <property type="entry name" value="ApbA"/>
</dbReference>
<dbReference type="InterPro" id="IPR013752">
    <property type="entry name" value="KPA_reductase"/>
</dbReference>
<dbReference type="InterPro" id="IPR051402">
    <property type="entry name" value="KPR-Related"/>
</dbReference>
<dbReference type="InterPro" id="IPR013332">
    <property type="entry name" value="KPR_N"/>
</dbReference>
<dbReference type="InterPro" id="IPR036291">
    <property type="entry name" value="NAD(P)-bd_dom_sf"/>
</dbReference>
<dbReference type="NCBIfam" id="TIGR00745">
    <property type="entry name" value="apbA_panE"/>
    <property type="match status" value="1"/>
</dbReference>
<dbReference type="PANTHER" id="PTHR21708:SF26">
    <property type="entry name" value="2-DEHYDROPANTOATE 2-REDUCTASE"/>
    <property type="match status" value="1"/>
</dbReference>
<dbReference type="PANTHER" id="PTHR21708">
    <property type="entry name" value="PROBABLE 2-DEHYDROPANTOATE 2-REDUCTASE"/>
    <property type="match status" value="1"/>
</dbReference>
<dbReference type="Pfam" id="PF02558">
    <property type="entry name" value="ApbA"/>
    <property type="match status" value="1"/>
</dbReference>
<dbReference type="Pfam" id="PF08546">
    <property type="entry name" value="ApbA_C"/>
    <property type="match status" value="1"/>
</dbReference>
<dbReference type="SUPFAM" id="SSF48179">
    <property type="entry name" value="6-phosphogluconate dehydrogenase C-terminal domain-like"/>
    <property type="match status" value="1"/>
</dbReference>
<dbReference type="SUPFAM" id="SSF51735">
    <property type="entry name" value="NAD(P)-binding Rossmann-fold domains"/>
    <property type="match status" value="1"/>
</dbReference>
<feature type="chain" id="PRO_0000157323" description="2-dehydropantoate 2-reductase">
    <location>
        <begin position="1"/>
        <end position="303"/>
    </location>
</feature>
<feature type="active site" description="Proton donor" evidence="1">
    <location>
        <position position="185"/>
    </location>
</feature>
<feature type="binding site" evidence="2">
    <location>
        <begin position="7"/>
        <end position="12"/>
    </location>
    <ligand>
        <name>NADP(+)</name>
        <dbReference type="ChEBI" id="CHEBI:58349"/>
    </ligand>
</feature>
<feature type="binding site" evidence="2">
    <location>
        <position position="78"/>
    </location>
    <ligand>
        <name>NADP(+)</name>
        <dbReference type="ChEBI" id="CHEBI:58349"/>
    </ligand>
</feature>
<feature type="binding site" evidence="2">
    <location>
        <position position="103"/>
    </location>
    <ligand>
        <name>NADP(+)</name>
        <dbReference type="ChEBI" id="CHEBI:58349"/>
    </ligand>
</feature>
<feature type="binding site" evidence="2">
    <location>
        <position position="129"/>
    </location>
    <ligand>
        <name>NADP(+)</name>
        <dbReference type="ChEBI" id="CHEBI:58349"/>
    </ligand>
</feature>
<feature type="binding site" evidence="2">
    <location>
        <position position="185"/>
    </location>
    <ligand>
        <name>substrate</name>
    </ligand>
</feature>
<feature type="binding site" evidence="2">
    <location>
        <position position="189"/>
    </location>
    <ligand>
        <name>substrate</name>
    </ligand>
</feature>
<feature type="binding site" evidence="2">
    <location>
        <position position="193"/>
    </location>
    <ligand>
        <name>substrate</name>
    </ligand>
</feature>
<feature type="binding site" evidence="2">
    <location>
        <position position="203"/>
    </location>
    <ligand>
        <name>substrate</name>
    </ligand>
</feature>
<feature type="binding site" evidence="2">
    <location>
        <begin position="252"/>
        <end position="255"/>
    </location>
    <ligand>
        <name>substrate</name>
    </ligand>
</feature>
<feature type="binding site" evidence="2">
    <location>
        <position position="267"/>
    </location>
    <ligand>
        <name>NADP(+)</name>
        <dbReference type="ChEBI" id="CHEBI:58349"/>
    </ligand>
</feature>
<keyword id="KW-0173">Coenzyme A biosynthesis</keyword>
<keyword id="KW-0963">Cytoplasm</keyword>
<keyword id="KW-0520">NAD</keyword>
<keyword id="KW-0521">NADP</keyword>
<keyword id="KW-0560">Oxidoreductase</keyword>
<keyword id="KW-1185">Reference proteome</keyword>
<organism>
    <name type="scientific">Halobacterium salinarum (strain ATCC 700922 / JCM 11081 / NRC-1)</name>
    <name type="common">Halobacterium halobium</name>
    <dbReference type="NCBI Taxonomy" id="64091"/>
    <lineage>
        <taxon>Archaea</taxon>
        <taxon>Methanobacteriati</taxon>
        <taxon>Methanobacteriota</taxon>
        <taxon>Stenosarchaea group</taxon>
        <taxon>Halobacteria</taxon>
        <taxon>Halobacteriales</taxon>
        <taxon>Halobacteriaceae</taxon>
        <taxon>Halobacterium</taxon>
        <taxon>Halobacterium salinarum NRC-34001</taxon>
    </lineage>
</organism>
<sequence length="303" mass="31124">MRVVVQGPGSLGSLVGGVLAGGETAVTLLGHQSEHLTRVREDGLRVVQPDGTTRVTRPSVATDPSVVADADLVVVCVKSYDTASAARALGRQCDGAMVLTLQNGLGNAAVLAEHVPADTVLVGTTTHGAARTEPGVVRHAGGGETTIGRYRGANDARVASVAAAFSTGGMETTVTASPQRAVWEKVLVNVGINAATALADVDNGALVECPPGERVLERAVTEGVRVAEAEGVSVSESVVERARQVAARTASNESSMRQDLAGGARTEVESLHGAVVERARDHDIAVPVIRTLADLVRLAQRDG</sequence>